<dbReference type="EC" id="2.7.1.-" evidence="1"/>
<dbReference type="EMBL" id="CU928145">
    <property type="protein sequence ID" value="CAV02104.1"/>
    <property type="molecule type" value="Genomic_DNA"/>
</dbReference>
<dbReference type="RefSeq" id="WP_001151854.1">
    <property type="nucleotide sequence ID" value="NC_011748.1"/>
</dbReference>
<dbReference type="SMR" id="B7LDY6"/>
<dbReference type="KEGG" id="eck:EC55989_4997"/>
<dbReference type="HOGENOM" id="CLU_052998_4_0_6"/>
<dbReference type="Proteomes" id="UP000000746">
    <property type="component" value="Chromosome"/>
</dbReference>
<dbReference type="GO" id="GO:0003950">
    <property type="term" value="F:NAD+ poly-ADP-ribosyltransferase activity"/>
    <property type="evidence" value="ECO:0007669"/>
    <property type="project" value="InterPro"/>
</dbReference>
<dbReference type="GO" id="GO:0000215">
    <property type="term" value="F:tRNA 2'-phosphotransferase activity"/>
    <property type="evidence" value="ECO:0007669"/>
    <property type="project" value="TreeGrafter"/>
</dbReference>
<dbReference type="GO" id="GO:0006388">
    <property type="term" value="P:tRNA splicing, via endonucleolytic cleavage and ligation"/>
    <property type="evidence" value="ECO:0007669"/>
    <property type="project" value="UniProtKB-UniRule"/>
</dbReference>
<dbReference type="FunFam" id="1.10.10.970:FF:000001">
    <property type="entry name" value="RNA 2'-phosphotransferase"/>
    <property type="match status" value="1"/>
</dbReference>
<dbReference type="FunFam" id="3.20.170.30:FF:000001">
    <property type="entry name" value="RNA 2'-phosphotransferase"/>
    <property type="match status" value="1"/>
</dbReference>
<dbReference type="Gene3D" id="3.20.170.30">
    <property type="match status" value="1"/>
</dbReference>
<dbReference type="Gene3D" id="1.10.10.970">
    <property type="entry name" value="RNA 2'-phosphotransferase, Tpt1/KptA family, N-terminal domain"/>
    <property type="match status" value="1"/>
</dbReference>
<dbReference type="HAMAP" id="MF_00299">
    <property type="entry name" value="KptA"/>
    <property type="match status" value="1"/>
</dbReference>
<dbReference type="InterPro" id="IPR002745">
    <property type="entry name" value="Ptrans_KptA/Tpt1"/>
</dbReference>
<dbReference type="InterPro" id="IPR042081">
    <property type="entry name" value="RNA_2'-PTrans_C"/>
</dbReference>
<dbReference type="InterPro" id="IPR022928">
    <property type="entry name" value="RNA_2'-PTrans_KptA"/>
</dbReference>
<dbReference type="InterPro" id="IPR042080">
    <property type="entry name" value="RNA_2'-PTrans_N"/>
</dbReference>
<dbReference type="NCBIfam" id="NF002012">
    <property type="entry name" value="PRK00819.1-1"/>
    <property type="match status" value="1"/>
</dbReference>
<dbReference type="NCBIfam" id="NF002014">
    <property type="entry name" value="PRK00819.1-4"/>
    <property type="match status" value="1"/>
</dbReference>
<dbReference type="PANTHER" id="PTHR12684">
    <property type="entry name" value="PUTATIVE PHOSPHOTRANSFERASE"/>
    <property type="match status" value="1"/>
</dbReference>
<dbReference type="PANTHER" id="PTHR12684:SF2">
    <property type="entry name" value="TRNA 2'-PHOSPHOTRANSFERASE 1"/>
    <property type="match status" value="1"/>
</dbReference>
<dbReference type="Pfam" id="PF01885">
    <property type="entry name" value="PTS_2-RNA"/>
    <property type="match status" value="1"/>
</dbReference>
<dbReference type="SUPFAM" id="SSF56399">
    <property type="entry name" value="ADP-ribosylation"/>
    <property type="match status" value="1"/>
</dbReference>
<protein>
    <recommendedName>
        <fullName evidence="1">Probable RNA 2'-phosphotransferase</fullName>
        <ecNumber evidence="1">2.7.1.-</ecNumber>
    </recommendedName>
</protein>
<comment type="function">
    <text evidence="1">Removes the 2'-phosphate from RNA via an intermediate in which the phosphate is ADP-ribosylated by NAD followed by a presumed transesterification to release the RNA and generate ADP-ribose 1''-2''-cyclic phosphate (APPR&gt;P). May function as an ADP-ribosylase.</text>
</comment>
<comment type="similarity">
    <text evidence="1">Belongs to the KptA/TPT1 family.</text>
</comment>
<accession>B7LDY6</accession>
<gene>
    <name evidence="1" type="primary">kptA</name>
    <name type="ordered locus">EC55989_4997</name>
</gene>
<reference key="1">
    <citation type="journal article" date="2009" name="PLoS Genet.">
        <title>Organised genome dynamics in the Escherichia coli species results in highly diverse adaptive paths.</title>
        <authorList>
            <person name="Touchon M."/>
            <person name="Hoede C."/>
            <person name="Tenaillon O."/>
            <person name="Barbe V."/>
            <person name="Baeriswyl S."/>
            <person name="Bidet P."/>
            <person name="Bingen E."/>
            <person name="Bonacorsi S."/>
            <person name="Bouchier C."/>
            <person name="Bouvet O."/>
            <person name="Calteau A."/>
            <person name="Chiapello H."/>
            <person name="Clermont O."/>
            <person name="Cruveiller S."/>
            <person name="Danchin A."/>
            <person name="Diard M."/>
            <person name="Dossat C."/>
            <person name="Karoui M.E."/>
            <person name="Frapy E."/>
            <person name="Garry L."/>
            <person name="Ghigo J.M."/>
            <person name="Gilles A.M."/>
            <person name="Johnson J."/>
            <person name="Le Bouguenec C."/>
            <person name="Lescat M."/>
            <person name="Mangenot S."/>
            <person name="Martinez-Jehanne V."/>
            <person name="Matic I."/>
            <person name="Nassif X."/>
            <person name="Oztas S."/>
            <person name="Petit M.A."/>
            <person name="Pichon C."/>
            <person name="Rouy Z."/>
            <person name="Ruf C.S."/>
            <person name="Schneider D."/>
            <person name="Tourret J."/>
            <person name="Vacherie B."/>
            <person name="Vallenet D."/>
            <person name="Medigue C."/>
            <person name="Rocha E.P.C."/>
            <person name="Denamur E."/>
        </authorList>
    </citation>
    <scope>NUCLEOTIDE SEQUENCE [LARGE SCALE GENOMIC DNA]</scope>
    <source>
        <strain>55989 / EAEC</strain>
    </source>
</reference>
<keyword id="KW-0520">NAD</keyword>
<keyword id="KW-1185">Reference proteome</keyword>
<keyword id="KW-0808">Transferase</keyword>
<name>KPTA_ECO55</name>
<sequence>MAKYNEKELADTSKFLSFVLRHKPEAIGIVLDREGWADIDKLILCAQKAGKRLTRALLDTVVATSDKKRFSYSSDGRCIRAVQGHSTSQVAISFAEKTPPQFLYHGTASRFLDEIKKQGLIAGERHYVHLSADEATARKVGARHGSPVILTVKAQEMAKRGIPFWQAENGVWLTSTVAVEFLEW</sequence>
<organism>
    <name type="scientific">Escherichia coli (strain 55989 / EAEC)</name>
    <dbReference type="NCBI Taxonomy" id="585055"/>
    <lineage>
        <taxon>Bacteria</taxon>
        <taxon>Pseudomonadati</taxon>
        <taxon>Pseudomonadota</taxon>
        <taxon>Gammaproteobacteria</taxon>
        <taxon>Enterobacterales</taxon>
        <taxon>Enterobacteriaceae</taxon>
        <taxon>Escherichia</taxon>
    </lineage>
</organism>
<evidence type="ECO:0000255" key="1">
    <source>
        <dbReference type="HAMAP-Rule" id="MF_00299"/>
    </source>
</evidence>
<feature type="chain" id="PRO_1000190752" description="Probable RNA 2'-phosphotransferase">
    <location>
        <begin position="1"/>
        <end position="184"/>
    </location>
</feature>
<proteinExistence type="inferred from homology"/>